<reference key="1">
    <citation type="submission" date="2008-05" db="EMBL/GenBank/DDBJ databases">
        <title>Complete sequence of chromosome of Geobacter lovleyi SZ.</title>
        <authorList>
            <consortium name="US DOE Joint Genome Institute"/>
            <person name="Lucas S."/>
            <person name="Copeland A."/>
            <person name="Lapidus A."/>
            <person name="Glavina del Rio T."/>
            <person name="Dalin E."/>
            <person name="Tice H."/>
            <person name="Bruce D."/>
            <person name="Goodwin L."/>
            <person name="Pitluck S."/>
            <person name="Chertkov O."/>
            <person name="Meincke L."/>
            <person name="Brettin T."/>
            <person name="Detter J.C."/>
            <person name="Han C."/>
            <person name="Tapia R."/>
            <person name="Kuske C.R."/>
            <person name="Schmutz J."/>
            <person name="Larimer F."/>
            <person name="Land M."/>
            <person name="Hauser L."/>
            <person name="Kyrpides N."/>
            <person name="Mikhailova N."/>
            <person name="Sung Y."/>
            <person name="Fletcher K.E."/>
            <person name="Ritalahti K.M."/>
            <person name="Loeffler F.E."/>
            <person name="Richardson P."/>
        </authorList>
    </citation>
    <scope>NUCLEOTIDE SEQUENCE [LARGE SCALE GENOMIC DNA]</scope>
    <source>
        <strain>ATCC BAA-1151 / DSM 17278 / SZ</strain>
    </source>
</reference>
<organism>
    <name type="scientific">Trichlorobacter lovleyi (strain ATCC BAA-1151 / DSM 17278 / SZ)</name>
    <name type="common">Geobacter lovleyi</name>
    <dbReference type="NCBI Taxonomy" id="398767"/>
    <lineage>
        <taxon>Bacteria</taxon>
        <taxon>Pseudomonadati</taxon>
        <taxon>Thermodesulfobacteriota</taxon>
        <taxon>Desulfuromonadia</taxon>
        <taxon>Geobacterales</taxon>
        <taxon>Geobacteraceae</taxon>
        <taxon>Trichlorobacter</taxon>
    </lineage>
</organism>
<sequence length="635" mass="71685">MERWSINESAKVYNLDNWGADLFSINKKGNICVHPSSNSKNAIDLRALVDDLIKRKIKPPILLRFMDVLQGRIASINRVFRNAIAENDYPAKYQTFYPIKVNQQRQVVEAIASYGKRYNIGLEVGSKPELVAGIAISTGNGLPIICNGYKDAEYIETVLFATRVGYNITIVVEKLFELEKIIELAKKTGIRPSLGIRVKLSSKGTGKWATSGGEDAKFGLRMSEIMAAIKMLQEADLLDCVNLLHSHIGSQVTKIDKIKTALIEAARIYSEMRKLGVNIQYLDIGGGLGVDYDGSKSSYFSSVNYTVEEYANDVIYQIKNICDEAGVDCPNIISESGRATVAHYSVLVTNVLNTNTQNLMPDYEQILEEMEKPAPTVKKLLDIYKSIDRYSLREDYHDTLQLINEAVSLFNLGYLTLQDRAIAEWLYSKIIKKINSIVEKIKPIPEELQNFQLALRQTYFANFSLFQSIPDSWAIDQLFPIMPLQRLGQRPDVMASIADITCDSDGEITSFVGENGRSKFLPMHKLKKDEDYYIGFFLIGAYQEILGDLHNLFGDTNAVHITFNKKTGYMIDTVINGDATWETLKYVQYKGPEILKHVRDNLEKQVAIKKVSIEESSHFIELLDRTLLGYTYLGE</sequence>
<proteinExistence type="inferred from homology"/>
<name>SPEA_TRIL1</name>
<evidence type="ECO:0000255" key="1">
    <source>
        <dbReference type="HAMAP-Rule" id="MF_01417"/>
    </source>
</evidence>
<accession>B3EAF3</accession>
<keyword id="KW-0210">Decarboxylase</keyword>
<keyword id="KW-0456">Lyase</keyword>
<keyword id="KW-0460">Magnesium</keyword>
<keyword id="KW-0479">Metal-binding</keyword>
<keyword id="KW-0620">Polyamine biosynthesis</keyword>
<keyword id="KW-0663">Pyridoxal phosphate</keyword>
<keyword id="KW-1185">Reference proteome</keyword>
<keyword id="KW-0745">Spermidine biosynthesis</keyword>
<gene>
    <name evidence="1" type="primary">speA</name>
    <name type="ordered locus">Glov_1675</name>
</gene>
<comment type="function">
    <text evidence="1">Catalyzes the biosynthesis of agmatine from arginine.</text>
</comment>
<comment type="catalytic activity">
    <reaction evidence="1">
        <text>L-arginine + H(+) = agmatine + CO2</text>
        <dbReference type="Rhea" id="RHEA:17641"/>
        <dbReference type="ChEBI" id="CHEBI:15378"/>
        <dbReference type="ChEBI" id="CHEBI:16526"/>
        <dbReference type="ChEBI" id="CHEBI:32682"/>
        <dbReference type="ChEBI" id="CHEBI:58145"/>
        <dbReference type="EC" id="4.1.1.19"/>
    </reaction>
</comment>
<comment type="cofactor">
    <cofactor evidence="1">
        <name>Mg(2+)</name>
        <dbReference type="ChEBI" id="CHEBI:18420"/>
    </cofactor>
</comment>
<comment type="cofactor">
    <cofactor evidence="1">
        <name>pyridoxal 5'-phosphate</name>
        <dbReference type="ChEBI" id="CHEBI:597326"/>
    </cofactor>
</comment>
<comment type="pathway">
    <text evidence="1">Amine and polyamine biosynthesis; agmatine biosynthesis; agmatine from L-arginine: step 1/1.</text>
</comment>
<comment type="similarity">
    <text evidence="1">Belongs to the Orn/Lys/Arg decarboxylase class-II family. SpeA subfamily.</text>
</comment>
<feature type="chain" id="PRO_1000145595" description="Biosynthetic arginine decarboxylase">
    <location>
        <begin position="1"/>
        <end position="635"/>
    </location>
</feature>
<feature type="binding site" evidence="1">
    <location>
        <begin position="282"/>
        <end position="292"/>
    </location>
    <ligand>
        <name>substrate</name>
    </ligand>
</feature>
<feature type="modified residue" description="N6-(pyridoxal phosphate)lysine" evidence="1">
    <location>
        <position position="100"/>
    </location>
</feature>
<protein>
    <recommendedName>
        <fullName evidence="1">Biosynthetic arginine decarboxylase</fullName>
        <shortName evidence="1">ADC</shortName>
        <ecNumber evidence="1">4.1.1.19</ecNumber>
    </recommendedName>
</protein>
<dbReference type="EC" id="4.1.1.19" evidence="1"/>
<dbReference type="EMBL" id="CP001089">
    <property type="protein sequence ID" value="ACD95391.1"/>
    <property type="molecule type" value="Genomic_DNA"/>
</dbReference>
<dbReference type="RefSeq" id="WP_012469733.1">
    <property type="nucleotide sequence ID" value="NC_010814.1"/>
</dbReference>
<dbReference type="SMR" id="B3EAF3"/>
<dbReference type="STRING" id="398767.Glov_1675"/>
<dbReference type="KEGG" id="glo:Glov_1675"/>
<dbReference type="eggNOG" id="COG1166">
    <property type="taxonomic scope" value="Bacteria"/>
</dbReference>
<dbReference type="HOGENOM" id="CLU_027243_1_0_7"/>
<dbReference type="OrthoDB" id="9802658at2"/>
<dbReference type="UniPathway" id="UPA00186">
    <property type="reaction ID" value="UER00284"/>
</dbReference>
<dbReference type="Proteomes" id="UP000002420">
    <property type="component" value="Chromosome"/>
</dbReference>
<dbReference type="GO" id="GO:0008792">
    <property type="term" value="F:arginine decarboxylase activity"/>
    <property type="evidence" value="ECO:0007669"/>
    <property type="project" value="UniProtKB-UniRule"/>
</dbReference>
<dbReference type="GO" id="GO:0046872">
    <property type="term" value="F:metal ion binding"/>
    <property type="evidence" value="ECO:0007669"/>
    <property type="project" value="UniProtKB-KW"/>
</dbReference>
<dbReference type="GO" id="GO:0006527">
    <property type="term" value="P:arginine catabolic process"/>
    <property type="evidence" value="ECO:0007669"/>
    <property type="project" value="InterPro"/>
</dbReference>
<dbReference type="GO" id="GO:0033388">
    <property type="term" value="P:putrescine biosynthetic process from arginine"/>
    <property type="evidence" value="ECO:0007669"/>
    <property type="project" value="TreeGrafter"/>
</dbReference>
<dbReference type="GO" id="GO:0008295">
    <property type="term" value="P:spermidine biosynthetic process"/>
    <property type="evidence" value="ECO:0007669"/>
    <property type="project" value="UniProtKB-UniRule"/>
</dbReference>
<dbReference type="CDD" id="cd06830">
    <property type="entry name" value="PLPDE_III_ADC"/>
    <property type="match status" value="1"/>
</dbReference>
<dbReference type="FunFam" id="1.20.58.930:FF:000002">
    <property type="entry name" value="Biosynthetic arginine decarboxylase"/>
    <property type="match status" value="1"/>
</dbReference>
<dbReference type="FunFam" id="3.20.20.10:FF:000001">
    <property type="entry name" value="Biosynthetic arginine decarboxylase"/>
    <property type="match status" value="1"/>
</dbReference>
<dbReference type="Gene3D" id="1.10.287.3440">
    <property type="match status" value="1"/>
</dbReference>
<dbReference type="Gene3D" id="1.20.58.930">
    <property type="match status" value="1"/>
</dbReference>
<dbReference type="Gene3D" id="3.20.20.10">
    <property type="entry name" value="Alanine racemase"/>
    <property type="match status" value="1"/>
</dbReference>
<dbReference type="Gene3D" id="2.40.37.10">
    <property type="entry name" value="Lyase, Ornithine Decarboxylase, Chain A, domain 1"/>
    <property type="match status" value="1"/>
</dbReference>
<dbReference type="HAMAP" id="MF_01417">
    <property type="entry name" value="SpeA"/>
    <property type="match status" value="1"/>
</dbReference>
<dbReference type="InterPro" id="IPR009006">
    <property type="entry name" value="Ala_racemase/Decarboxylase_C"/>
</dbReference>
<dbReference type="InterPro" id="IPR040634">
    <property type="entry name" value="Arg_decarb_HB"/>
</dbReference>
<dbReference type="InterPro" id="IPR041128">
    <property type="entry name" value="Arg_decarbox_C"/>
</dbReference>
<dbReference type="InterPro" id="IPR002985">
    <property type="entry name" value="Arg_decrbxlase"/>
</dbReference>
<dbReference type="InterPro" id="IPR022657">
    <property type="entry name" value="De-COase2_CS"/>
</dbReference>
<dbReference type="InterPro" id="IPR022644">
    <property type="entry name" value="De-COase2_N"/>
</dbReference>
<dbReference type="InterPro" id="IPR022653">
    <property type="entry name" value="De-COase2_pyr-phos_BS"/>
</dbReference>
<dbReference type="InterPro" id="IPR000183">
    <property type="entry name" value="Orn/DAP/Arg_de-COase"/>
</dbReference>
<dbReference type="InterPro" id="IPR029066">
    <property type="entry name" value="PLP-binding_barrel"/>
</dbReference>
<dbReference type="NCBIfam" id="NF003763">
    <property type="entry name" value="PRK05354.1"/>
    <property type="match status" value="1"/>
</dbReference>
<dbReference type="NCBIfam" id="TIGR01273">
    <property type="entry name" value="speA"/>
    <property type="match status" value="1"/>
</dbReference>
<dbReference type="PANTHER" id="PTHR43295">
    <property type="entry name" value="ARGININE DECARBOXYLASE"/>
    <property type="match status" value="1"/>
</dbReference>
<dbReference type="PANTHER" id="PTHR43295:SF9">
    <property type="entry name" value="BIOSYNTHETIC ARGININE DECARBOXYLASE"/>
    <property type="match status" value="1"/>
</dbReference>
<dbReference type="Pfam" id="PF17810">
    <property type="entry name" value="Arg_decarb_HB"/>
    <property type="match status" value="1"/>
</dbReference>
<dbReference type="Pfam" id="PF17944">
    <property type="entry name" value="Arg_decarbox_C"/>
    <property type="match status" value="1"/>
</dbReference>
<dbReference type="Pfam" id="PF02784">
    <property type="entry name" value="Orn_Arg_deC_N"/>
    <property type="match status" value="1"/>
</dbReference>
<dbReference type="PIRSF" id="PIRSF001336">
    <property type="entry name" value="Arg_decrbxlase"/>
    <property type="match status" value="1"/>
</dbReference>
<dbReference type="PRINTS" id="PR01180">
    <property type="entry name" value="ARGDCRBXLASE"/>
</dbReference>
<dbReference type="PRINTS" id="PR01179">
    <property type="entry name" value="ODADCRBXLASE"/>
</dbReference>
<dbReference type="SUPFAM" id="SSF50621">
    <property type="entry name" value="Alanine racemase C-terminal domain-like"/>
    <property type="match status" value="1"/>
</dbReference>
<dbReference type="SUPFAM" id="SSF51419">
    <property type="entry name" value="PLP-binding barrel"/>
    <property type="match status" value="1"/>
</dbReference>
<dbReference type="PROSITE" id="PS00878">
    <property type="entry name" value="ODR_DC_2_1"/>
    <property type="match status" value="1"/>
</dbReference>
<dbReference type="PROSITE" id="PS00879">
    <property type="entry name" value="ODR_DC_2_2"/>
    <property type="match status" value="1"/>
</dbReference>